<evidence type="ECO:0000255" key="1">
    <source>
        <dbReference type="HAMAP-Rule" id="MF_00206"/>
    </source>
</evidence>
<evidence type="ECO:0000255" key="2">
    <source>
        <dbReference type="PROSITE-ProRule" id="PRU01266"/>
    </source>
</evidence>
<name>LIPA2_NOSS1</name>
<comment type="function">
    <text evidence="1">Catalyzes the radical-mediated insertion of two sulfur atoms into the C-6 and C-8 positions of the octanoyl moiety bound to the lipoyl domains of lipoate-dependent enzymes, thereby converting the octanoylated domains into lipoylated derivatives.</text>
</comment>
<comment type="catalytic activity">
    <reaction evidence="1">
        <text>[[Fe-S] cluster scaffold protein carrying a second [4Fe-4S](2+) cluster] + N(6)-octanoyl-L-lysyl-[protein] + 2 oxidized [2Fe-2S]-[ferredoxin] + 2 S-adenosyl-L-methionine + 4 H(+) = [[Fe-S] cluster scaffold protein] + N(6)-[(R)-dihydrolipoyl]-L-lysyl-[protein] + 4 Fe(3+) + 2 hydrogen sulfide + 2 5'-deoxyadenosine + 2 L-methionine + 2 reduced [2Fe-2S]-[ferredoxin]</text>
        <dbReference type="Rhea" id="RHEA:16585"/>
        <dbReference type="Rhea" id="RHEA-COMP:9928"/>
        <dbReference type="Rhea" id="RHEA-COMP:10000"/>
        <dbReference type="Rhea" id="RHEA-COMP:10001"/>
        <dbReference type="Rhea" id="RHEA-COMP:10475"/>
        <dbReference type="Rhea" id="RHEA-COMP:14568"/>
        <dbReference type="Rhea" id="RHEA-COMP:14569"/>
        <dbReference type="ChEBI" id="CHEBI:15378"/>
        <dbReference type="ChEBI" id="CHEBI:17319"/>
        <dbReference type="ChEBI" id="CHEBI:29034"/>
        <dbReference type="ChEBI" id="CHEBI:29919"/>
        <dbReference type="ChEBI" id="CHEBI:33722"/>
        <dbReference type="ChEBI" id="CHEBI:33737"/>
        <dbReference type="ChEBI" id="CHEBI:33738"/>
        <dbReference type="ChEBI" id="CHEBI:57844"/>
        <dbReference type="ChEBI" id="CHEBI:59789"/>
        <dbReference type="ChEBI" id="CHEBI:78809"/>
        <dbReference type="ChEBI" id="CHEBI:83100"/>
        <dbReference type="EC" id="2.8.1.8"/>
    </reaction>
</comment>
<comment type="cofactor">
    <cofactor evidence="1">
        <name>[4Fe-4S] cluster</name>
        <dbReference type="ChEBI" id="CHEBI:49883"/>
    </cofactor>
    <text evidence="1">Binds 2 [4Fe-4S] clusters per subunit. One cluster is coordinated with 3 cysteines and an exchangeable S-adenosyl-L-methionine.</text>
</comment>
<comment type="pathway">
    <text evidence="1">Protein modification; protein lipoylation via endogenous pathway; protein N(6)-(lipoyl)lysine from octanoyl-[acyl-carrier-protein]: step 2/2.</text>
</comment>
<comment type="subcellular location">
    <subcellularLocation>
        <location evidence="1">Cytoplasm</location>
    </subcellularLocation>
</comment>
<comment type="similarity">
    <text evidence="1">Belongs to the radical SAM superfamily. Lipoyl synthase family.</text>
</comment>
<organism>
    <name type="scientific">Nostoc sp. (strain PCC 7120 / SAG 25.82 / UTEX 2576)</name>
    <dbReference type="NCBI Taxonomy" id="103690"/>
    <lineage>
        <taxon>Bacteria</taxon>
        <taxon>Bacillati</taxon>
        <taxon>Cyanobacteriota</taxon>
        <taxon>Cyanophyceae</taxon>
        <taxon>Nostocales</taxon>
        <taxon>Nostocaceae</taxon>
        <taxon>Nostoc</taxon>
    </lineage>
</organism>
<gene>
    <name evidence="1" type="primary">lipA2</name>
    <name type="ordered locus">alr1282</name>
</gene>
<proteinExistence type="inferred from homology"/>
<sequence>MTASQSAQFKSEITAMPSWLRRPIGKASELSTVQRIIKQRQIHTICEEGRCPNRGECYAQKTATFLLMGPTCTRVCAFCQVDKGHAPMPLDPEEGQKVAEAVQLLGLRYVVLTSVARDDLQDQGASHFVQTMEAIRQLNPGTQIEVLTPDFWGGAGAGESGQRQRIKMIVEAQPACFNHNIETVRRLTGPVRRGAKYDRSLRVLSLVKELNPRIPTKSGLMVGYGETVAELVEAMTDLRNIGCDRLTIGQYMRPSLEHLPVQKYWTPEEFEHLGKLAREMGFSHVRSAPLVRSSYHAGEE</sequence>
<feature type="chain" id="PRO_0000102283" description="Lipoyl synthase 2">
    <location>
        <begin position="1"/>
        <end position="300"/>
    </location>
</feature>
<feature type="domain" description="Radical SAM core" evidence="2">
    <location>
        <begin position="58"/>
        <end position="283"/>
    </location>
</feature>
<feature type="binding site" evidence="1">
    <location>
        <position position="46"/>
    </location>
    <ligand>
        <name>[4Fe-4S] cluster</name>
        <dbReference type="ChEBI" id="CHEBI:49883"/>
        <label>1</label>
    </ligand>
</feature>
<feature type="binding site" evidence="1">
    <location>
        <position position="51"/>
    </location>
    <ligand>
        <name>[4Fe-4S] cluster</name>
        <dbReference type="ChEBI" id="CHEBI:49883"/>
        <label>1</label>
    </ligand>
</feature>
<feature type="binding site" evidence="1">
    <location>
        <position position="57"/>
    </location>
    <ligand>
        <name>[4Fe-4S] cluster</name>
        <dbReference type="ChEBI" id="CHEBI:49883"/>
        <label>1</label>
    </ligand>
</feature>
<feature type="binding site" evidence="1">
    <location>
        <position position="72"/>
    </location>
    <ligand>
        <name>[4Fe-4S] cluster</name>
        <dbReference type="ChEBI" id="CHEBI:49883"/>
        <label>2</label>
        <note>4Fe-4S-S-AdoMet</note>
    </ligand>
</feature>
<feature type="binding site" evidence="1">
    <location>
        <position position="76"/>
    </location>
    <ligand>
        <name>[4Fe-4S] cluster</name>
        <dbReference type="ChEBI" id="CHEBI:49883"/>
        <label>2</label>
        <note>4Fe-4S-S-AdoMet</note>
    </ligand>
</feature>
<feature type="binding site" evidence="1">
    <location>
        <position position="79"/>
    </location>
    <ligand>
        <name>[4Fe-4S] cluster</name>
        <dbReference type="ChEBI" id="CHEBI:49883"/>
        <label>2</label>
        <note>4Fe-4S-S-AdoMet</note>
    </ligand>
</feature>
<feature type="binding site" evidence="1">
    <location>
        <position position="294"/>
    </location>
    <ligand>
        <name>[4Fe-4S] cluster</name>
        <dbReference type="ChEBI" id="CHEBI:49883"/>
        <label>1</label>
    </ligand>
</feature>
<accession>Q8YXD1</accession>
<keyword id="KW-0004">4Fe-4S</keyword>
<keyword id="KW-0963">Cytoplasm</keyword>
<keyword id="KW-0408">Iron</keyword>
<keyword id="KW-0411">Iron-sulfur</keyword>
<keyword id="KW-0479">Metal-binding</keyword>
<keyword id="KW-1185">Reference proteome</keyword>
<keyword id="KW-0949">S-adenosyl-L-methionine</keyword>
<keyword id="KW-0808">Transferase</keyword>
<reference key="1">
    <citation type="journal article" date="2001" name="DNA Res.">
        <title>Complete genomic sequence of the filamentous nitrogen-fixing cyanobacterium Anabaena sp. strain PCC 7120.</title>
        <authorList>
            <person name="Kaneko T."/>
            <person name="Nakamura Y."/>
            <person name="Wolk C.P."/>
            <person name="Kuritz T."/>
            <person name="Sasamoto S."/>
            <person name="Watanabe A."/>
            <person name="Iriguchi M."/>
            <person name="Ishikawa A."/>
            <person name="Kawashima K."/>
            <person name="Kimura T."/>
            <person name="Kishida Y."/>
            <person name="Kohara M."/>
            <person name="Matsumoto M."/>
            <person name="Matsuno A."/>
            <person name="Muraki A."/>
            <person name="Nakazaki N."/>
            <person name="Shimpo S."/>
            <person name="Sugimoto M."/>
            <person name="Takazawa M."/>
            <person name="Yamada M."/>
            <person name="Yasuda M."/>
            <person name="Tabata S."/>
        </authorList>
    </citation>
    <scope>NUCLEOTIDE SEQUENCE [LARGE SCALE GENOMIC DNA]</scope>
    <source>
        <strain>PCC 7120 / SAG 25.82 / UTEX 2576</strain>
    </source>
</reference>
<dbReference type="EC" id="2.8.1.8" evidence="1"/>
<dbReference type="EMBL" id="BA000019">
    <property type="protein sequence ID" value="BAB73239.1"/>
    <property type="molecule type" value="Genomic_DNA"/>
</dbReference>
<dbReference type="PIR" id="AG1966">
    <property type="entry name" value="AG1966"/>
</dbReference>
<dbReference type="RefSeq" id="WP_010995454.1">
    <property type="nucleotide sequence ID" value="NC_003272.1"/>
</dbReference>
<dbReference type="SMR" id="Q8YXD1"/>
<dbReference type="STRING" id="103690.gene:10493296"/>
<dbReference type="KEGG" id="ana:alr1282"/>
<dbReference type="eggNOG" id="COG0320">
    <property type="taxonomic scope" value="Bacteria"/>
</dbReference>
<dbReference type="OrthoDB" id="9787898at2"/>
<dbReference type="UniPathway" id="UPA00538">
    <property type="reaction ID" value="UER00593"/>
</dbReference>
<dbReference type="Proteomes" id="UP000002483">
    <property type="component" value="Chromosome"/>
</dbReference>
<dbReference type="GO" id="GO:0005737">
    <property type="term" value="C:cytoplasm"/>
    <property type="evidence" value="ECO:0007669"/>
    <property type="project" value="UniProtKB-SubCell"/>
</dbReference>
<dbReference type="GO" id="GO:0051539">
    <property type="term" value="F:4 iron, 4 sulfur cluster binding"/>
    <property type="evidence" value="ECO:0007669"/>
    <property type="project" value="UniProtKB-UniRule"/>
</dbReference>
<dbReference type="GO" id="GO:0016992">
    <property type="term" value="F:lipoate synthase activity"/>
    <property type="evidence" value="ECO:0007669"/>
    <property type="project" value="UniProtKB-UniRule"/>
</dbReference>
<dbReference type="GO" id="GO:0046872">
    <property type="term" value="F:metal ion binding"/>
    <property type="evidence" value="ECO:0007669"/>
    <property type="project" value="UniProtKB-KW"/>
</dbReference>
<dbReference type="CDD" id="cd01335">
    <property type="entry name" value="Radical_SAM"/>
    <property type="match status" value="1"/>
</dbReference>
<dbReference type="Gene3D" id="3.20.20.70">
    <property type="entry name" value="Aldolase class I"/>
    <property type="match status" value="1"/>
</dbReference>
<dbReference type="HAMAP" id="MF_00206">
    <property type="entry name" value="Lipoyl_synth"/>
    <property type="match status" value="1"/>
</dbReference>
<dbReference type="InterPro" id="IPR013785">
    <property type="entry name" value="Aldolase_TIM"/>
</dbReference>
<dbReference type="InterPro" id="IPR006638">
    <property type="entry name" value="Elp3/MiaA/NifB-like_rSAM"/>
</dbReference>
<dbReference type="InterPro" id="IPR003698">
    <property type="entry name" value="Lipoyl_synth"/>
</dbReference>
<dbReference type="InterPro" id="IPR007197">
    <property type="entry name" value="rSAM"/>
</dbReference>
<dbReference type="NCBIfam" id="TIGR00510">
    <property type="entry name" value="lipA"/>
    <property type="match status" value="1"/>
</dbReference>
<dbReference type="NCBIfam" id="NF004019">
    <property type="entry name" value="PRK05481.1"/>
    <property type="match status" value="1"/>
</dbReference>
<dbReference type="NCBIfam" id="NF009544">
    <property type="entry name" value="PRK12928.1"/>
    <property type="match status" value="1"/>
</dbReference>
<dbReference type="PANTHER" id="PTHR10949">
    <property type="entry name" value="LIPOYL SYNTHASE"/>
    <property type="match status" value="1"/>
</dbReference>
<dbReference type="PANTHER" id="PTHR10949:SF0">
    <property type="entry name" value="LIPOYL SYNTHASE, MITOCHONDRIAL"/>
    <property type="match status" value="1"/>
</dbReference>
<dbReference type="Pfam" id="PF04055">
    <property type="entry name" value="Radical_SAM"/>
    <property type="match status" value="1"/>
</dbReference>
<dbReference type="PIRSF" id="PIRSF005963">
    <property type="entry name" value="Lipoyl_synth"/>
    <property type="match status" value="1"/>
</dbReference>
<dbReference type="SFLD" id="SFLDF00271">
    <property type="entry name" value="lipoyl_synthase"/>
    <property type="match status" value="1"/>
</dbReference>
<dbReference type="SFLD" id="SFLDG01058">
    <property type="entry name" value="lipoyl_synthase_like"/>
    <property type="match status" value="1"/>
</dbReference>
<dbReference type="SMART" id="SM00729">
    <property type="entry name" value="Elp3"/>
    <property type="match status" value="1"/>
</dbReference>
<dbReference type="SUPFAM" id="SSF102114">
    <property type="entry name" value="Radical SAM enzymes"/>
    <property type="match status" value="1"/>
</dbReference>
<dbReference type="PROSITE" id="PS51918">
    <property type="entry name" value="RADICAL_SAM"/>
    <property type="match status" value="1"/>
</dbReference>
<protein>
    <recommendedName>
        <fullName evidence="1">Lipoyl synthase 2</fullName>
        <ecNumber evidence="1">2.8.1.8</ecNumber>
    </recommendedName>
    <alternativeName>
        <fullName evidence="1">Lip-syn 2</fullName>
        <shortName evidence="1">LS 2</shortName>
    </alternativeName>
    <alternativeName>
        <fullName evidence="1">Lipoate synthase 2</fullName>
    </alternativeName>
    <alternativeName>
        <fullName evidence="1">Lipoic acid synthase 2</fullName>
    </alternativeName>
    <alternativeName>
        <fullName evidence="1">Sulfur insertion protein LipA 2</fullName>
    </alternativeName>
</protein>